<protein>
    <recommendedName>
        <fullName>DNA polymerase subunit gamma-2, mitochondrial</fullName>
    </recommendedName>
    <alternativeName>
        <fullName>Mitochondrial DNA polymerase accessory subunit</fullName>
    </alternativeName>
    <alternativeName>
        <fullName>MtPolB</fullName>
    </alternativeName>
    <alternativeName>
        <fullName>PolG-beta</fullName>
    </alternativeName>
</protein>
<reference key="1">
    <citation type="journal article" date="1999" name="Mol. Cell. Biol.">
        <title>The accessory subunit of Xenopus laevis mitochondrial DNA polymerase gamma increases processivity of the catalytic subunit of human DNA polymerase gamma and is related to class II aminoacyl-tRNA synthetases.</title>
        <authorList>
            <person name="Carrodeguas J.A."/>
            <person name="Kobayashi R."/>
            <person name="Lim S.E."/>
            <person name="Copeland W.C."/>
            <person name="Bogenhagen D.F."/>
        </authorList>
    </citation>
    <scope>NUCLEOTIDE SEQUENCE [MRNA]</scope>
    <scope>PARTIAL PROTEIN SEQUENCE</scope>
</reference>
<dbReference type="EMBL" id="AF124606">
    <property type="protein sequence ID" value="AAD32572.1"/>
    <property type="molecule type" value="mRNA"/>
</dbReference>
<dbReference type="RefSeq" id="NP_001081904.1">
    <property type="nucleotide sequence ID" value="NM_001088435.1"/>
</dbReference>
<dbReference type="RefSeq" id="XP_018089639.1">
    <property type="nucleotide sequence ID" value="XM_018234150.1"/>
</dbReference>
<dbReference type="SMR" id="Q9W6G7"/>
<dbReference type="ComplexPortal" id="CPX-2095">
    <property type="entry name" value="Mitochondrial DNA polymerase gamma complex"/>
</dbReference>
<dbReference type="GeneID" id="398112"/>
<dbReference type="KEGG" id="xla:398112"/>
<dbReference type="AGR" id="Xenbase:XB-GENE-6251937"/>
<dbReference type="CTD" id="398112"/>
<dbReference type="Xenbase" id="XB-GENE-6251937">
    <property type="gene designation" value="polg2.L"/>
</dbReference>
<dbReference type="OMA" id="WGQEVLE"/>
<dbReference type="OrthoDB" id="57698at2759"/>
<dbReference type="Proteomes" id="UP000186698">
    <property type="component" value="Chromosome 9_10L"/>
</dbReference>
<dbReference type="GO" id="GO:0005737">
    <property type="term" value="C:cytoplasm"/>
    <property type="evidence" value="ECO:0000318"/>
    <property type="project" value="GO_Central"/>
</dbReference>
<dbReference type="GO" id="GO:0005760">
    <property type="term" value="C:gamma DNA polymerase complex"/>
    <property type="evidence" value="ECO:0000353"/>
    <property type="project" value="ComplexPortal"/>
</dbReference>
<dbReference type="GO" id="GO:0005759">
    <property type="term" value="C:mitochondrial matrix"/>
    <property type="evidence" value="ECO:0000303"/>
    <property type="project" value="ComplexPortal"/>
</dbReference>
<dbReference type="GO" id="GO:0005739">
    <property type="term" value="C:mitochondrion"/>
    <property type="evidence" value="ECO:0000318"/>
    <property type="project" value="GO_Central"/>
</dbReference>
<dbReference type="GO" id="GO:0003677">
    <property type="term" value="F:DNA binding"/>
    <property type="evidence" value="ECO:0007669"/>
    <property type="project" value="UniProtKB-KW"/>
</dbReference>
<dbReference type="GO" id="GO:0006264">
    <property type="term" value="P:mitochondrial DNA replication"/>
    <property type="evidence" value="ECO:0000318"/>
    <property type="project" value="GO_Central"/>
</dbReference>
<dbReference type="CDD" id="cd00774">
    <property type="entry name" value="GlyRS-like_core"/>
    <property type="match status" value="1"/>
</dbReference>
<dbReference type="CDD" id="cd02426">
    <property type="entry name" value="Pol_gamma_b_Cterm"/>
    <property type="match status" value="1"/>
</dbReference>
<dbReference type="FunFam" id="3.40.50.800:FF:000095">
    <property type="entry name" value="Polymerase (DNA directed), gamma 2, accessory subunit"/>
    <property type="match status" value="1"/>
</dbReference>
<dbReference type="Gene3D" id="3.40.50.800">
    <property type="entry name" value="Anticodon-binding domain"/>
    <property type="match status" value="1"/>
</dbReference>
<dbReference type="Gene3D" id="3.30.930.10">
    <property type="entry name" value="Bira Bifunctional Protein, Domain 2"/>
    <property type="match status" value="1"/>
</dbReference>
<dbReference type="InterPro" id="IPR045864">
    <property type="entry name" value="aa-tRNA-synth_II/BPL/LPL"/>
</dbReference>
<dbReference type="InterPro" id="IPR004154">
    <property type="entry name" value="Anticodon-bd"/>
</dbReference>
<dbReference type="InterPro" id="IPR036621">
    <property type="entry name" value="Anticodon-bd_dom_sf"/>
</dbReference>
<dbReference type="InterPro" id="IPR027031">
    <property type="entry name" value="Gly-tRNA_synthase/POLG2"/>
</dbReference>
<dbReference type="InterPro" id="IPR033731">
    <property type="entry name" value="GlyRS-like_core"/>
</dbReference>
<dbReference type="InterPro" id="IPR042064">
    <property type="entry name" value="POLG2_C"/>
</dbReference>
<dbReference type="PANTHER" id="PTHR10745:SF8">
    <property type="entry name" value="DNA POLYMERASE SUBUNIT GAMMA-2, MITOCHONDRIAL"/>
    <property type="match status" value="1"/>
</dbReference>
<dbReference type="PANTHER" id="PTHR10745">
    <property type="entry name" value="GLYCYL-TRNA SYNTHETASE/DNA POLYMERASE SUBUNIT GAMMA-2"/>
    <property type="match status" value="1"/>
</dbReference>
<dbReference type="Pfam" id="PF03129">
    <property type="entry name" value="HGTP_anticodon"/>
    <property type="match status" value="1"/>
</dbReference>
<dbReference type="SUPFAM" id="SSF52954">
    <property type="entry name" value="Class II aaRS ABD-related"/>
    <property type="match status" value="1"/>
</dbReference>
<dbReference type="SUPFAM" id="SSF55681">
    <property type="entry name" value="Class II aaRS and biotin synthetases"/>
    <property type="match status" value="1"/>
</dbReference>
<evidence type="ECO:0000250" key="1"/>
<evidence type="ECO:0000250" key="2">
    <source>
        <dbReference type="UniProtKB" id="Q9UHN1"/>
    </source>
</evidence>
<keyword id="KW-0903">Direct protein sequencing</keyword>
<keyword id="KW-0235">DNA replication</keyword>
<keyword id="KW-0238">DNA-binding</keyword>
<keyword id="KW-0496">Mitochondrion</keyword>
<keyword id="KW-1185">Reference proteome</keyword>
<keyword id="KW-0809">Transit peptide</keyword>
<organism>
    <name type="scientific">Xenopus laevis</name>
    <name type="common">African clawed frog</name>
    <dbReference type="NCBI Taxonomy" id="8355"/>
    <lineage>
        <taxon>Eukaryota</taxon>
        <taxon>Metazoa</taxon>
        <taxon>Chordata</taxon>
        <taxon>Craniata</taxon>
        <taxon>Vertebrata</taxon>
        <taxon>Euteleostomi</taxon>
        <taxon>Amphibia</taxon>
        <taxon>Batrachia</taxon>
        <taxon>Anura</taxon>
        <taxon>Pipoidea</taxon>
        <taxon>Pipidae</taxon>
        <taxon>Xenopodinae</taxon>
        <taxon>Xenopus</taxon>
        <taxon>Xenopus</taxon>
    </lineage>
</organism>
<accession>Q9W6G7</accession>
<proteinExistence type="evidence at protein level"/>
<feature type="transit peptide" description="Mitochondrion">
    <location>
        <begin position="1"/>
        <end position="44"/>
    </location>
</feature>
<feature type="chain" id="PRO_0000007316" description="DNA polymerase subunit gamma-2, mitochondrial">
    <location>
        <begin position="45"/>
        <end position="463"/>
    </location>
</feature>
<sequence length="463" mass="52283">MLLTLKNTGQLLVAACSKVARSLAKYHPRVNHHRHCVWCSKRGLTTGGTAQKQDILFHLCQQRHFLSGETLTCTSLVQGCHNLGPLGVELKRNLVAQWWNSVVVYREQVLGIDTLHHLSTPSSAPEKPLLAICTQHLKELPRDQLVKWLEDPAGKLEFLRHELLYGALLEYVPSMELLNKKMPFGLAEIGKCFHSIPEERNKGTILPRIGERTVASLVWFSSPKSSGQWQDYWLRQRLQWWQKFAQSPSGFSCNDIQDGQGRKSSLIQYEFPWGRETIETLCNMDDSALFQMHPGCTTKLQARDGRKSVVPHVVWVSGDLDRGILAYLSDALQQTEAPAVRGQYHQREVLKLHPTLAPIKVAVDMGKGPTGELRLVCQGLSSELREQGVYVWPGYQETLHGSLEQLYTKYDKMGVLFTVLVSESTLENGLLQVRSRDTTLKETIHVSKVKDFLVRYIAAAGNL</sequence>
<comment type="function">
    <text evidence="2">Mitochondrial polymerase processivity subunit. It regulates the polymerase and exonuclease activities promoting processive DNA synthesis. Binds to ss-DNA.</text>
</comment>
<comment type="subunit">
    <text evidence="1">Heterotrimer composed of a catalytic subunit and a homodimer of accessory subunits.</text>
</comment>
<comment type="subcellular location">
    <subcellularLocation>
        <location>Mitochondrion</location>
    </subcellularLocation>
</comment>
<gene>
    <name type="primary">polg2</name>
    <name type="synonym">mtpolb</name>
</gene>
<name>DPOG2_XENLA</name>